<sequence>GKAGKDSGKAKAKAVSRSARAGLQFPVGRIHRHLKNRTTSHGRVGATAAVYSAAILEYLTAEVLELAGNASKDLKVKRITPRHLQLAIRGDEELDSLIKATIAGGGVIPHIHKSLIGKKGSQKAT</sequence>
<organism>
    <name type="scientific">Strongylocentrotus purpuratus</name>
    <name type="common">Purple sea urchin</name>
    <dbReference type="NCBI Taxonomy" id="7668"/>
    <lineage>
        <taxon>Eukaryota</taxon>
        <taxon>Metazoa</taxon>
        <taxon>Echinodermata</taxon>
        <taxon>Eleutherozoa</taxon>
        <taxon>Echinozoa</taxon>
        <taxon>Echinoidea</taxon>
        <taxon>Euechinoidea</taxon>
        <taxon>Echinacea</taxon>
        <taxon>Camarodonta</taxon>
        <taxon>Echinidea</taxon>
        <taxon>Strongylocentrotidae</taxon>
        <taxon>Strongylocentrotus</taxon>
    </lineage>
</organism>
<gene>
    <name type="primary">H2A.F/Z</name>
</gene>
<feature type="chain" id="PRO_0000055310" description="Histone H2A.V">
    <location>
        <begin position="1" status="less than"/>
        <end position="125"/>
    </location>
</feature>
<feature type="cross-link" description="Glycyl lysine isopeptide (Lys-Gly) (interchain with G-Cter in ubiquitin)" evidence="3">
    <location>
        <position position="119"/>
    </location>
</feature>
<feature type="non-terminal residue">
    <location>
        <position position="1"/>
    </location>
</feature>
<protein>
    <recommendedName>
        <fullName>Histone H2A.V</fullName>
    </recommendedName>
    <alternativeName>
        <fullName>H2A.F/Z</fullName>
    </alternativeName>
</protein>
<reference key="1">
    <citation type="journal article" date="1987" name="Nucleic Acids Res.">
        <title>Characterization of a cDNA clone coding for a sea urchin histone H2A variant related to the H2A.F/Z histone protein in vertebrates.</title>
        <authorList>
            <person name="Ernst S.G."/>
            <person name="Miller H."/>
            <person name="Brenner C.A."/>
            <person name="Nocente-Mcgrath C."/>
            <person name="Francis S."/>
            <person name="McIsaac R."/>
        </authorList>
    </citation>
    <scope>NUCLEOTIDE SEQUENCE [MRNA]</scope>
</reference>
<reference key="2">
    <citation type="journal article" date="1995" name="Dev. Genet.">
        <title>Embryonic regulation of histone ubiquitination in the sea urchin.</title>
        <authorList>
            <person name="Jasinskiene N."/>
            <person name="Jasinskas A."/>
            <person name="Langmore J.P."/>
        </authorList>
    </citation>
    <scope>UBIQUITINATION</scope>
</reference>
<dbReference type="EMBL" id="X05547">
    <property type="protein sequence ID" value="CAA29061.1"/>
    <property type="molecule type" value="mRNA"/>
</dbReference>
<dbReference type="PIR" id="S07392">
    <property type="entry name" value="S07392"/>
</dbReference>
<dbReference type="SMR" id="P08991"/>
<dbReference type="FunCoup" id="P08991">
    <property type="interactions" value="1853"/>
</dbReference>
<dbReference type="STRING" id="7668.P08991"/>
<dbReference type="iPTMnet" id="P08991"/>
<dbReference type="eggNOG" id="KOG1757">
    <property type="taxonomic scope" value="Eukaryota"/>
</dbReference>
<dbReference type="HOGENOM" id="CLU_1965151_0_0_1"/>
<dbReference type="InParanoid" id="P08991"/>
<dbReference type="Proteomes" id="UP000007110">
    <property type="component" value="Unassembled WGS sequence"/>
</dbReference>
<dbReference type="GO" id="GO:0000786">
    <property type="term" value="C:nucleosome"/>
    <property type="evidence" value="ECO:0000318"/>
    <property type="project" value="GO_Central"/>
</dbReference>
<dbReference type="GO" id="GO:0005634">
    <property type="term" value="C:nucleus"/>
    <property type="evidence" value="ECO:0000318"/>
    <property type="project" value="GO_Central"/>
</dbReference>
<dbReference type="GO" id="GO:0003677">
    <property type="term" value="F:DNA binding"/>
    <property type="evidence" value="ECO:0007669"/>
    <property type="project" value="UniProtKB-KW"/>
</dbReference>
<dbReference type="GO" id="GO:0046982">
    <property type="term" value="F:protein heterodimerization activity"/>
    <property type="evidence" value="ECO:0007669"/>
    <property type="project" value="InterPro"/>
</dbReference>
<dbReference type="GO" id="GO:0030527">
    <property type="term" value="F:structural constituent of chromatin"/>
    <property type="evidence" value="ECO:0000318"/>
    <property type="project" value="GO_Central"/>
</dbReference>
<dbReference type="GO" id="GO:0031507">
    <property type="term" value="P:heterochromatin formation"/>
    <property type="evidence" value="ECO:0000318"/>
    <property type="project" value="GO_Central"/>
</dbReference>
<dbReference type="CDD" id="cd00074">
    <property type="entry name" value="HFD_H2A"/>
    <property type="match status" value="1"/>
</dbReference>
<dbReference type="FunFam" id="1.10.20.10:FF:000005">
    <property type="entry name" value="Histone H2A"/>
    <property type="match status" value="1"/>
</dbReference>
<dbReference type="Gene3D" id="1.10.20.10">
    <property type="entry name" value="Histone, subunit A"/>
    <property type="match status" value="1"/>
</dbReference>
<dbReference type="InterPro" id="IPR009072">
    <property type="entry name" value="Histone-fold"/>
</dbReference>
<dbReference type="InterPro" id="IPR002119">
    <property type="entry name" value="Histone_H2A"/>
</dbReference>
<dbReference type="InterPro" id="IPR007125">
    <property type="entry name" value="Histone_H2A/H2B/H3"/>
</dbReference>
<dbReference type="InterPro" id="IPR032454">
    <property type="entry name" value="Histone_H2A_C"/>
</dbReference>
<dbReference type="InterPro" id="IPR032458">
    <property type="entry name" value="Histone_H2A_CS"/>
</dbReference>
<dbReference type="PANTHER" id="PTHR23430">
    <property type="entry name" value="HISTONE H2A"/>
    <property type="match status" value="1"/>
</dbReference>
<dbReference type="Pfam" id="PF00125">
    <property type="entry name" value="Histone"/>
    <property type="match status" value="1"/>
</dbReference>
<dbReference type="Pfam" id="PF16211">
    <property type="entry name" value="Histone_H2A_C"/>
    <property type="match status" value="1"/>
</dbReference>
<dbReference type="PRINTS" id="PR00620">
    <property type="entry name" value="HISTONEH2A"/>
</dbReference>
<dbReference type="SMART" id="SM00414">
    <property type="entry name" value="H2A"/>
    <property type="match status" value="1"/>
</dbReference>
<dbReference type="SUPFAM" id="SSF47113">
    <property type="entry name" value="Histone-fold"/>
    <property type="match status" value="1"/>
</dbReference>
<dbReference type="PROSITE" id="PS00046">
    <property type="entry name" value="HISTONE_H2A"/>
    <property type="match status" value="1"/>
</dbReference>
<evidence type="ECO:0000250" key="1"/>
<evidence type="ECO:0000305" key="2"/>
<evidence type="ECO:0000305" key="3">
    <source>
    </source>
</evidence>
<keyword id="KW-0007">Acetylation</keyword>
<keyword id="KW-0158">Chromosome</keyword>
<keyword id="KW-0238">DNA-binding</keyword>
<keyword id="KW-1017">Isopeptide bond</keyword>
<keyword id="KW-0544">Nucleosome core</keyword>
<keyword id="KW-0539">Nucleus</keyword>
<keyword id="KW-1185">Reference proteome</keyword>
<keyword id="KW-0832">Ubl conjugation</keyword>
<proteinExistence type="evidence at protein level"/>
<name>H2AV_STRPU</name>
<accession>P08991</accession>
<comment type="function">
    <text evidence="1">Variant histone H2A which replaces conventional H2A in a subset of nucleosomes. Nucleosomes wrap and compact DNA into chromatin, limiting DNA accessibility to the cellular machineries which require DNA as a template. Histones thereby play a central role in transcription regulation, DNA repair, DNA replication and chromosomal stability. DNA accessibility is regulated via a complex set of post-translational modifications of histones, also called histone code, and nucleosome remodeling. May be involved in the formation of constitutive heterochromatin. May be required for chromosome segregation during cell division (By similarity).</text>
</comment>
<comment type="subunit">
    <text evidence="1">The nucleosome is a histone octamer containing two molecules each of H2A, H2B, H3 and H4 assembled in one H3-H4 heterotetramer and two H2A-H2B heterodimers. The octamer wraps approximately 147 bp of DNA. H2A or its variant H2AF/Z forms a heterodimer with H2B (By similarity).</text>
</comment>
<comment type="subcellular location">
    <subcellularLocation>
        <location>Nucleus</location>
    </subcellularLocation>
    <subcellularLocation>
        <location>Chromosome</location>
    </subcellularLocation>
</comment>
<comment type="PTM">
    <text evidence="2">Monoubiquitination of Lys-119 gives a specific tag for epigenetic transcriptional repression.</text>
</comment>
<comment type="PTM">
    <text evidence="1">May be acetylated.</text>
</comment>
<comment type="similarity">
    <text evidence="2">Belongs to the histone H2A family.</text>
</comment>